<sequence length="65" mass="7306">MSETITVNCPTCGKTVVWGEISPFRPFCSKRCQLIDLGEWAAEEKRIPSSGDLSESDDWSEEPKQ</sequence>
<comment type="function">
    <text evidence="1">Inhibits all the catalytic activities of DNA gyrase by preventing its interaction with DNA. Acts by binding directly to the C-terminal domain of GyrB, which probably disrupts DNA binding by the gyrase.</text>
</comment>
<comment type="cofactor">
    <cofactor evidence="1">
        <name>Zn(2+)</name>
        <dbReference type="ChEBI" id="CHEBI:29105"/>
    </cofactor>
    <text evidence="1">Binds 1 zinc ion.</text>
</comment>
<comment type="subunit">
    <text evidence="1">Interacts with GyrB.</text>
</comment>
<comment type="similarity">
    <text evidence="1">Belongs to the DNA gyrase inhibitor YacG family.</text>
</comment>
<proteinExistence type="inferred from homology"/>
<accession>C4ZRJ5</accession>
<dbReference type="EMBL" id="CP001396">
    <property type="protein sequence ID" value="ACR62264.1"/>
    <property type="molecule type" value="Genomic_DNA"/>
</dbReference>
<dbReference type="RefSeq" id="WP_000005042.1">
    <property type="nucleotide sequence ID" value="NC_012759.1"/>
</dbReference>
<dbReference type="SMR" id="C4ZRJ5"/>
<dbReference type="GeneID" id="93777334"/>
<dbReference type="KEGG" id="ebw:BWG_0095"/>
<dbReference type="HOGENOM" id="CLU_178280_3_1_6"/>
<dbReference type="GO" id="GO:0008657">
    <property type="term" value="F:DNA topoisomerase type II (double strand cut, ATP-hydrolyzing) inhibitor activity"/>
    <property type="evidence" value="ECO:0007669"/>
    <property type="project" value="UniProtKB-UniRule"/>
</dbReference>
<dbReference type="GO" id="GO:0008270">
    <property type="term" value="F:zinc ion binding"/>
    <property type="evidence" value="ECO:0007669"/>
    <property type="project" value="UniProtKB-UniRule"/>
</dbReference>
<dbReference type="GO" id="GO:0006355">
    <property type="term" value="P:regulation of DNA-templated transcription"/>
    <property type="evidence" value="ECO:0007669"/>
    <property type="project" value="InterPro"/>
</dbReference>
<dbReference type="FunFam" id="3.30.50.10:FF:000026">
    <property type="entry name" value="DNA gyrase inhibitor YacG"/>
    <property type="match status" value="1"/>
</dbReference>
<dbReference type="Gene3D" id="3.30.50.10">
    <property type="entry name" value="Erythroid Transcription Factor GATA-1, subunit A"/>
    <property type="match status" value="1"/>
</dbReference>
<dbReference type="HAMAP" id="MF_00649">
    <property type="entry name" value="DNA_gyrase_inhibitor_YacG"/>
    <property type="match status" value="1"/>
</dbReference>
<dbReference type="InterPro" id="IPR005584">
    <property type="entry name" value="DNA_gyrase_inhibitor_YacG"/>
</dbReference>
<dbReference type="InterPro" id="IPR013088">
    <property type="entry name" value="Znf_NHR/GATA"/>
</dbReference>
<dbReference type="NCBIfam" id="NF001638">
    <property type="entry name" value="PRK00418.1"/>
    <property type="match status" value="1"/>
</dbReference>
<dbReference type="PANTHER" id="PTHR36150">
    <property type="entry name" value="DNA GYRASE INHIBITOR YACG"/>
    <property type="match status" value="1"/>
</dbReference>
<dbReference type="PANTHER" id="PTHR36150:SF1">
    <property type="entry name" value="DNA GYRASE INHIBITOR YACG"/>
    <property type="match status" value="1"/>
</dbReference>
<dbReference type="Pfam" id="PF03884">
    <property type="entry name" value="YacG"/>
    <property type="match status" value="1"/>
</dbReference>
<dbReference type="SUPFAM" id="SSF57716">
    <property type="entry name" value="Glucocorticoid receptor-like (DNA-binding domain)"/>
    <property type="match status" value="1"/>
</dbReference>
<keyword id="KW-0479">Metal-binding</keyword>
<keyword id="KW-0862">Zinc</keyword>
<evidence type="ECO:0000255" key="1">
    <source>
        <dbReference type="HAMAP-Rule" id="MF_00649"/>
    </source>
</evidence>
<evidence type="ECO:0000256" key="2">
    <source>
        <dbReference type="SAM" id="MobiDB-lite"/>
    </source>
</evidence>
<gene>
    <name evidence="1" type="primary">yacG</name>
    <name type="ordered locus">BWG_0095</name>
</gene>
<name>YACG_ECOBW</name>
<feature type="chain" id="PRO_1000212397" description="DNA gyrase inhibitor YacG">
    <location>
        <begin position="1"/>
        <end position="65"/>
    </location>
</feature>
<feature type="region of interest" description="Disordered" evidence="2">
    <location>
        <begin position="45"/>
        <end position="65"/>
    </location>
</feature>
<feature type="compositionally biased region" description="Acidic residues" evidence="2">
    <location>
        <begin position="54"/>
        <end position="65"/>
    </location>
</feature>
<feature type="binding site" evidence="1">
    <location>
        <position position="9"/>
    </location>
    <ligand>
        <name>Zn(2+)</name>
        <dbReference type="ChEBI" id="CHEBI:29105"/>
    </ligand>
</feature>
<feature type="binding site" evidence="1">
    <location>
        <position position="12"/>
    </location>
    <ligand>
        <name>Zn(2+)</name>
        <dbReference type="ChEBI" id="CHEBI:29105"/>
    </ligand>
</feature>
<feature type="binding site" evidence="1">
    <location>
        <position position="28"/>
    </location>
    <ligand>
        <name>Zn(2+)</name>
        <dbReference type="ChEBI" id="CHEBI:29105"/>
    </ligand>
</feature>
<feature type="binding site" evidence="1">
    <location>
        <position position="32"/>
    </location>
    <ligand>
        <name>Zn(2+)</name>
        <dbReference type="ChEBI" id="CHEBI:29105"/>
    </ligand>
</feature>
<protein>
    <recommendedName>
        <fullName evidence="1">DNA gyrase inhibitor YacG</fullName>
    </recommendedName>
</protein>
<organism>
    <name type="scientific">Escherichia coli (strain K12 / MC4100 / BW2952)</name>
    <dbReference type="NCBI Taxonomy" id="595496"/>
    <lineage>
        <taxon>Bacteria</taxon>
        <taxon>Pseudomonadati</taxon>
        <taxon>Pseudomonadota</taxon>
        <taxon>Gammaproteobacteria</taxon>
        <taxon>Enterobacterales</taxon>
        <taxon>Enterobacteriaceae</taxon>
        <taxon>Escherichia</taxon>
    </lineage>
</organism>
<reference key="1">
    <citation type="journal article" date="2009" name="J. Bacteriol.">
        <title>Genomic sequencing reveals regulatory mutations and recombinational events in the widely used MC4100 lineage of Escherichia coli K-12.</title>
        <authorList>
            <person name="Ferenci T."/>
            <person name="Zhou Z."/>
            <person name="Betteridge T."/>
            <person name="Ren Y."/>
            <person name="Liu Y."/>
            <person name="Feng L."/>
            <person name="Reeves P.R."/>
            <person name="Wang L."/>
        </authorList>
    </citation>
    <scope>NUCLEOTIDE SEQUENCE [LARGE SCALE GENOMIC DNA]</scope>
    <source>
        <strain>K12 / MC4100 / BW2952</strain>
    </source>
</reference>